<dbReference type="EMBL" id="FM178379">
    <property type="protein sequence ID" value="CAQ80157.1"/>
    <property type="molecule type" value="Genomic_DNA"/>
</dbReference>
<dbReference type="RefSeq" id="WP_012550952.1">
    <property type="nucleotide sequence ID" value="NC_011312.1"/>
</dbReference>
<dbReference type="SMR" id="B6EKA3"/>
<dbReference type="KEGG" id="vsa:VSAL_I2473"/>
<dbReference type="eggNOG" id="COG0576">
    <property type="taxonomic scope" value="Bacteria"/>
</dbReference>
<dbReference type="HOGENOM" id="CLU_057217_6_0_6"/>
<dbReference type="Proteomes" id="UP000001730">
    <property type="component" value="Chromosome 1"/>
</dbReference>
<dbReference type="GO" id="GO:0005829">
    <property type="term" value="C:cytosol"/>
    <property type="evidence" value="ECO:0007669"/>
    <property type="project" value="TreeGrafter"/>
</dbReference>
<dbReference type="GO" id="GO:0000774">
    <property type="term" value="F:adenyl-nucleotide exchange factor activity"/>
    <property type="evidence" value="ECO:0007669"/>
    <property type="project" value="InterPro"/>
</dbReference>
<dbReference type="GO" id="GO:0042803">
    <property type="term" value="F:protein homodimerization activity"/>
    <property type="evidence" value="ECO:0007669"/>
    <property type="project" value="InterPro"/>
</dbReference>
<dbReference type="GO" id="GO:0051087">
    <property type="term" value="F:protein-folding chaperone binding"/>
    <property type="evidence" value="ECO:0007669"/>
    <property type="project" value="InterPro"/>
</dbReference>
<dbReference type="GO" id="GO:0051082">
    <property type="term" value="F:unfolded protein binding"/>
    <property type="evidence" value="ECO:0007669"/>
    <property type="project" value="TreeGrafter"/>
</dbReference>
<dbReference type="GO" id="GO:0006457">
    <property type="term" value="P:protein folding"/>
    <property type="evidence" value="ECO:0007669"/>
    <property type="project" value="InterPro"/>
</dbReference>
<dbReference type="CDD" id="cd00446">
    <property type="entry name" value="GrpE"/>
    <property type="match status" value="1"/>
</dbReference>
<dbReference type="FunFam" id="2.30.22.10:FF:000001">
    <property type="entry name" value="Protein GrpE"/>
    <property type="match status" value="1"/>
</dbReference>
<dbReference type="Gene3D" id="3.90.20.20">
    <property type="match status" value="1"/>
</dbReference>
<dbReference type="Gene3D" id="2.30.22.10">
    <property type="entry name" value="Head domain of nucleotide exchange factor GrpE"/>
    <property type="match status" value="1"/>
</dbReference>
<dbReference type="HAMAP" id="MF_01151">
    <property type="entry name" value="GrpE"/>
    <property type="match status" value="1"/>
</dbReference>
<dbReference type="InterPro" id="IPR000740">
    <property type="entry name" value="GrpE"/>
</dbReference>
<dbReference type="InterPro" id="IPR013805">
    <property type="entry name" value="GrpE_coiled_coil"/>
</dbReference>
<dbReference type="InterPro" id="IPR009012">
    <property type="entry name" value="GrpE_head"/>
</dbReference>
<dbReference type="NCBIfam" id="NF010737">
    <property type="entry name" value="PRK14139.1"/>
    <property type="match status" value="1"/>
</dbReference>
<dbReference type="NCBIfam" id="NF010738">
    <property type="entry name" value="PRK14140.1"/>
    <property type="match status" value="1"/>
</dbReference>
<dbReference type="NCBIfam" id="NF010748">
    <property type="entry name" value="PRK14150.1"/>
    <property type="match status" value="1"/>
</dbReference>
<dbReference type="PANTHER" id="PTHR21237">
    <property type="entry name" value="GRPE PROTEIN"/>
    <property type="match status" value="1"/>
</dbReference>
<dbReference type="PANTHER" id="PTHR21237:SF23">
    <property type="entry name" value="GRPE PROTEIN HOMOLOG, MITOCHONDRIAL"/>
    <property type="match status" value="1"/>
</dbReference>
<dbReference type="Pfam" id="PF01025">
    <property type="entry name" value="GrpE"/>
    <property type="match status" value="1"/>
</dbReference>
<dbReference type="PRINTS" id="PR00773">
    <property type="entry name" value="GRPEPROTEIN"/>
</dbReference>
<dbReference type="SUPFAM" id="SSF58014">
    <property type="entry name" value="Coiled-coil domain of nucleotide exchange factor GrpE"/>
    <property type="match status" value="1"/>
</dbReference>
<dbReference type="SUPFAM" id="SSF51064">
    <property type="entry name" value="Head domain of nucleotide exchange factor GrpE"/>
    <property type="match status" value="1"/>
</dbReference>
<dbReference type="PROSITE" id="PS01071">
    <property type="entry name" value="GRPE"/>
    <property type="match status" value="1"/>
</dbReference>
<feature type="chain" id="PRO_1000137534" description="Protein GrpE">
    <location>
        <begin position="1"/>
        <end position="194"/>
    </location>
</feature>
<gene>
    <name evidence="1" type="primary">grpE</name>
    <name type="ordered locus">VSAL_I2473</name>
</gene>
<proteinExistence type="inferred from homology"/>
<keyword id="KW-0143">Chaperone</keyword>
<keyword id="KW-0963">Cytoplasm</keyword>
<keyword id="KW-0346">Stress response</keyword>
<evidence type="ECO:0000255" key="1">
    <source>
        <dbReference type="HAMAP-Rule" id="MF_01151"/>
    </source>
</evidence>
<sequence>MNNEEKKVNEEIVVEDQIEAIGTEADVEWNESMEESQDAKIAELEAALLASQAQLKEQQDAVLRAKAEEQNVRRRAEGDIDKARKYALKKFAGELLPVIDNLERALESGDKENEAAKVLLEGVELTLQTFISTIEKFGLTVINPVGETFNPEHHQAIGMQASPDHESNTVMVVMQKGYSLNEQVIRPAMVMVAQ</sequence>
<protein>
    <recommendedName>
        <fullName evidence="1">Protein GrpE</fullName>
    </recommendedName>
    <alternativeName>
        <fullName evidence="1">HSP-70 cofactor</fullName>
    </alternativeName>
</protein>
<name>GRPE_ALISL</name>
<reference key="1">
    <citation type="journal article" date="2008" name="BMC Genomics">
        <title>The genome sequence of the fish pathogen Aliivibrio salmonicida strain LFI1238 shows extensive evidence of gene decay.</title>
        <authorList>
            <person name="Hjerde E."/>
            <person name="Lorentzen M.S."/>
            <person name="Holden M.T."/>
            <person name="Seeger K."/>
            <person name="Paulsen S."/>
            <person name="Bason N."/>
            <person name="Churcher C."/>
            <person name="Harris D."/>
            <person name="Norbertczak H."/>
            <person name="Quail M.A."/>
            <person name="Sanders S."/>
            <person name="Thurston S."/>
            <person name="Parkhill J."/>
            <person name="Willassen N.P."/>
            <person name="Thomson N.R."/>
        </authorList>
    </citation>
    <scope>NUCLEOTIDE SEQUENCE [LARGE SCALE GENOMIC DNA]</scope>
    <source>
        <strain>LFI1238</strain>
    </source>
</reference>
<organism>
    <name type="scientific">Aliivibrio salmonicida (strain LFI1238)</name>
    <name type="common">Vibrio salmonicida (strain LFI1238)</name>
    <dbReference type="NCBI Taxonomy" id="316275"/>
    <lineage>
        <taxon>Bacteria</taxon>
        <taxon>Pseudomonadati</taxon>
        <taxon>Pseudomonadota</taxon>
        <taxon>Gammaproteobacteria</taxon>
        <taxon>Vibrionales</taxon>
        <taxon>Vibrionaceae</taxon>
        <taxon>Aliivibrio</taxon>
    </lineage>
</organism>
<comment type="function">
    <text evidence="1">Participates actively in the response to hyperosmotic and heat shock by preventing the aggregation of stress-denatured proteins, in association with DnaK and GrpE. It is the nucleotide exchange factor for DnaK and may function as a thermosensor. Unfolded proteins bind initially to DnaJ; upon interaction with the DnaJ-bound protein, DnaK hydrolyzes its bound ATP, resulting in the formation of a stable complex. GrpE releases ADP from DnaK; ATP binding to DnaK triggers the release of the substrate protein, thus completing the reaction cycle. Several rounds of ATP-dependent interactions between DnaJ, DnaK and GrpE are required for fully efficient folding.</text>
</comment>
<comment type="subunit">
    <text evidence="1">Homodimer.</text>
</comment>
<comment type="subcellular location">
    <subcellularLocation>
        <location evidence="1">Cytoplasm</location>
    </subcellularLocation>
</comment>
<comment type="similarity">
    <text evidence="1">Belongs to the GrpE family.</text>
</comment>
<accession>B6EKA3</accession>